<gene>
    <name evidence="1" type="primary">aroC</name>
    <name type="ordered locus">RPC_1142</name>
</gene>
<name>AROC_RHOPB</name>
<comment type="function">
    <text evidence="1">Catalyzes the anti-1,4-elimination of the C-3 phosphate and the C-6 proR hydrogen from 5-enolpyruvylshikimate-3-phosphate (EPSP) to yield chorismate, which is the branch point compound that serves as the starting substrate for the three terminal pathways of aromatic amino acid biosynthesis. This reaction introduces a second double bond into the aromatic ring system.</text>
</comment>
<comment type="catalytic activity">
    <reaction evidence="1">
        <text>5-O-(1-carboxyvinyl)-3-phosphoshikimate = chorismate + phosphate</text>
        <dbReference type="Rhea" id="RHEA:21020"/>
        <dbReference type="ChEBI" id="CHEBI:29748"/>
        <dbReference type="ChEBI" id="CHEBI:43474"/>
        <dbReference type="ChEBI" id="CHEBI:57701"/>
        <dbReference type="EC" id="4.2.3.5"/>
    </reaction>
</comment>
<comment type="cofactor">
    <cofactor evidence="1">
        <name>FMNH2</name>
        <dbReference type="ChEBI" id="CHEBI:57618"/>
    </cofactor>
    <text evidence="1">Reduced FMN (FMNH(2)).</text>
</comment>
<comment type="pathway">
    <text evidence="1">Metabolic intermediate biosynthesis; chorismate biosynthesis; chorismate from D-erythrose 4-phosphate and phosphoenolpyruvate: step 7/7.</text>
</comment>
<comment type="subunit">
    <text evidence="1">Homotetramer.</text>
</comment>
<comment type="similarity">
    <text evidence="1">Belongs to the chorismate synthase family.</text>
</comment>
<organism>
    <name type="scientific">Rhodopseudomonas palustris (strain BisB18)</name>
    <dbReference type="NCBI Taxonomy" id="316056"/>
    <lineage>
        <taxon>Bacteria</taxon>
        <taxon>Pseudomonadati</taxon>
        <taxon>Pseudomonadota</taxon>
        <taxon>Alphaproteobacteria</taxon>
        <taxon>Hyphomicrobiales</taxon>
        <taxon>Nitrobacteraceae</taxon>
        <taxon>Rhodopseudomonas</taxon>
    </lineage>
</organism>
<proteinExistence type="inferred from homology"/>
<reference key="1">
    <citation type="submission" date="2006-03" db="EMBL/GenBank/DDBJ databases">
        <title>Complete sequence of Rhodopseudomonas palustris BisB18.</title>
        <authorList>
            <consortium name="US DOE Joint Genome Institute"/>
            <person name="Copeland A."/>
            <person name="Lucas S."/>
            <person name="Lapidus A."/>
            <person name="Barry K."/>
            <person name="Detter J.C."/>
            <person name="Glavina del Rio T."/>
            <person name="Hammon N."/>
            <person name="Israni S."/>
            <person name="Dalin E."/>
            <person name="Tice H."/>
            <person name="Pitluck S."/>
            <person name="Chain P."/>
            <person name="Malfatti S."/>
            <person name="Shin M."/>
            <person name="Vergez L."/>
            <person name="Schmutz J."/>
            <person name="Larimer F."/>
            <person name="Land M."/>
            <person name="Hauser L."/>
            <person name="Pelletier D.A."/>
            <person name="Kyrpides N."/>
            <person name="Anderson I."/>
            <person name="Oda Y."/>
            <person name="Harwood C.S."/>
            <person name="Richardson P."/>
        </authorList>
    </citation>
    <scope>NUCLEOTIDE SEQUENCE [LARGE SCALE GENOMIC DNA]</scope>
    <source>
        <strain>BisB18</strain>
    </source>
</reference>
<accession>Q21A81</accession>
<feature type="chain" id="PRO_0000256326" description="Chorismate synthase">
    <location>
        <begin position="1"/>
        <end position="362"/>
    </location>
</feature>
<feature type="binding site" evidence="1">
    <location>
        <position position="48"/>
    </location>
    <ligand>
        <name>NADP(+)</name>
        <dbReference type="ChEBI" id="CHEBI:58349"/>
    </ligand>
</feature>
<feature type="binding site" evidence="1">
    <location>
        <position position="54"/>
    </location>
    <ligand>
        <name>NADP(+)</name>
        <dbReference type="ChEBI" id="CHEBI:58349"/>
    </ligand>
</feature>
<feature type="binding site" evidence="1">
    <location>
        <begin position="131"/>
        <end position="133"/>
    </location>
    <ligand>
        <name>FMN</name>
        <dbReference type="ChEBI" id="CHEBI:58210"/>
    </ligand>
</feature>
<feature type="binding site" evidence="1">
    <location>
        <begin position="243"/>
        <end position="244"/>
    </location>
    <ligand>
        <name>FMN</name>
        <dbReference type="ChEBI" id="CHEBI:58210"/>
    </ligand>
</feature>
<feature type="binding site" evidence="1">
    <location>
        <position position="287"/>
    </location>
    <ligand>
        <name>FMN</name>
        <dbReference type="ChEBI" id="CHEBI:58210"/>
    </ligand>
</feature>
<feature type="binding site" evidence="1">
    <location>
        <begin position="302"/>
        <end position="306"/>
    </location>
    <ligand>
        <name>FMN</name>
        <dbReference type="ChEBI" id="CHEBI:58210"/>
    </ligand>
</feature>
<feature type="binding site" evidence="1">
    <location>
        <position position="328"/>
    </location>
    <ligand>
        <name>FMN</name>
        <dbReference type="ChEBI" id="CHEBI:58210"/>
    </ligand>
</feature>
<protein>
    <recommendedName>
        <fullName evidence="1">Chorismate synthase</fullName>
        <shortName evidence="1">CS</shortName>
        <ecNumber evidence="1">4.2.3.5</ecNumber>
    </recommendedName>
    <alternativeName>
        <fullName evidence="1">5-enolpyruvylshikimate-3-phosphate phospholyase</fullName>
    </alternativeName>
</protein>
<evidence type="ECO:0000255" key="1">
    <source>
        <dbReference type="HAMAP-Rule" id="MF_00300"/>
    </source>
</evidence>
<keyword id="KW-0028">Amino-acid biosynthesis</keyword>
<keyword id="KW-0057">Aromatic amino acid biosynthesis</keyword>
<keyword id="KW-0274">FAD</keyword>
<keyword id="KW-0285">Flavoprotein</keyword>
<keyword id="KW-0288">FMN</keyword>
<keyword id="KW-0456">Lyase</keyword>
<keyword id="KW-0521">NADP</keyword>
<sequence>MSFNTFGHMFRVTTFGESHGVAIGCVVDGCPPLIALTEADIQRDLDRRRPGQSRFTTQRQEADQVKILSGVMVHPQSGLQVTTGAPIALLIENTDQRSKDYSEIKDKFRPGHADFTYEAKYGIRDYRGGGRSSARETATRVAAGAIARKVVPGITVRAALVQMGPHQIDRDNWDWEEVGNNPFFCPDKDKAKFFEDYLDGIRKNGSSIGAVIEVVADGVPAGWGAPIYAKLDTDIAAALMSINAVKGVEIGDGFATAALTGEQNADEMRAGNDGPSFLSNHAGGILGGISTGQPVVARFAVKPTSSILAPRKTVDRDGHDTDILTKGRHDPCVGIRAVSVAEAMVACVLADHLIRHRGQIGG</sequence>
<dbReference type="EC" id="4.2.3.5" evidence="1"/>
<dbReference type="EMBL" id="CP000301">
    <property type="protein sequence ID" value="ABD86705.1"/>
    <property type="molecule type" value="Genomic_DNA"/>
</dbReference>
<dbReference type="SMR" id="Q21A81"/>
<dbReference type="STRING" id="316056.RPC_1142"/>
<dbReference type="KEGG" id="rpc:RPC_1142"/>
<dbReference type="eggNOG" id="COG0082">
    <property type="taxonomic scope" value="Bacteria"/>
</dbReference>
<dbReference type="HOGENOM" id="CLU_034547_0_0_5"/>
<dbReference type="OrthoDB" id="9771806at2"/>
<dbReference type="UniPathway" id="UPA00053">
    <property type="reaction ID" value="UER00090"/>
</dbReference>
<dbReference type="GO" id="GO:0005829">
    <property type="term" value="C:cytosol"/>
    <property type="evidence" value="ECO:0007669"/>
    <property type="project" value="TreeGrafter"/>
</dbReference>
<dbReference type="GO" id="GO:0004107">
    <property type="term" value="F:chorismate synthase activity"/>
    <property type="evidence" value="ECO:0007669"/>
    <property type="project" value="UniProtKB-UniRule"/>
</dbReference>
<dbReference type="GO" id="GO:0010181">
    <property type="term" value="F:FMN binding"/>
    <property type="evidence" value="ECO:0007669"/>
    <property type="project" value="TreeGrafter"/>
</dbReference>
<dbReference type="GO" id="GO:0008652">
    <property type="term" value="P:amino acid biosynthetic process"/>
    <property type="evidence" value="ECO:0007669"/>
    <property type="project" value="UniProtKB-KW"/>
</dbReference>
<dbReference type="GO" id="GO:0009073">
    <property type="term" value="P:aromatic amino acid family biosynthetic process"/>
    <property type="evidence" value="ECO:0007669"/>
    <property type="project" value="UniProtKB-KW"/>
</dbReference>
<dbReference type="GO" id="GO:0009423">
    <property type="term" value="P:chorismate biosynthetic process"/>
    <property type="evidence" value="ECO:0007669"/>
    <property type="project" value="UniProtKB-UniRule"/>
</dbReference>
<dbReference type="CDD" id="cd07304">
    <property type="entry name" value="Chorismate_synthase"/>
    <property type="match status" value="1"/>
</dbReference>
<dbReference type="Gene3D" id="3.60.150.10">
    <property type="entry name" value="Chorismate synthase AroC"/>
    <property type="match status" value="1"/>
</dbReference>
<dbReference type="HAMAP" id="MF_00300">
    <property type="entry name" value="Chorismate_synth"/>
    <property type="match status" value="1"/>
</dbReference>
<dbReference type="InterPro" id="IPR000453">
    <property type="entry name" value="Chorismate_synth"/>
</dbReference>
<dbReference type="InterPro" id="IPR035904">
    <property type="entry name" value="Chorismate_synth_AroC_sf"/>
</dbReference>
<dbReference type="InterPro" id="IPR020541">
    <property type="entry name" value="Chorismate_synthase_CS"/>
</dbReference>
<dbReference type="NCBIfam" id="TIGR00033">
    <property type="entry name" value="aroC"/>
    <property type="match status" value="1"/>
</dbReference>
<dbReference type="NCBIfam" id="NF003793">
    <property type="entry name" value="PRK05382.1"/>
    <property type="match status" value="1"/>
</dbReference>
<dbReference type="PANTHER" id="PTHR21085">
    <property type="entry name" value="CHORISMATE SYNTHASE"/>
    <property type="match status" value="1"/>
</dbReference>
<dbReference type="PANTHER" id="PTHR21085:SF0">
    <property type="entry name" value="CHORISMATE SYNTHASE"/>
    <property type="match status" value="1"/>
</dbReference>
<dbReference type="Pfam" id="PF01264">
    <property type="entry name" value="Chorismate_synt"/>
    <property type="match status" value="1"/>
</dbReference>
<dbReference type="PIRSF" id="PIRSF001456">
    <property type="entry name" value="Chorismate_synth"/>
    <property type="match status" value="1"/>
</dbReference>
<dbReference type="SUPFAM" id="SSF103263">
    <property type="entry name" value="Chorismate synthase, AroC"/>
    <property type="match status" value="1"/>
</dbReference>
<dbReference type="PROSITE" id="PS00787">
    <property type="entry name" value="CHORISMATE_SYNTHASE_1"/>
    <property type="match status" value="1"/>
</dbReference>
<dbReference type="PROSITE" id="PS00788">
    <property type="entry name" value="CHORISMATE_SYNTHASE_2"/>
    <property type="match status" value="1"/>
</dbReference>
<dbReference type="PROSITE" id="PS00789">
    <property type="entry name" value="CHORISMATE_SYNTHASE_3"/>
    <property type="match status" value="1"/>
</dbReference>